<name>YBD1_SCHPO</name>
<proteinExistence type="predicted"/>
<keyword id="KW-1185">Reference proteome</keyword>
<gene>
    <name type="ORF">SPBC16C6.01c</name>
    <name type="ORF">SPBC543.11c</name>
</gene>
<organism>
    <name type="scientific">Schizosaccharomyces pombe (strain 972 / ATCC 24843)</name>
    <name type="common">Fission yeast</name>
    <dbReference type="NCBI Taxonomy" id="284812"/>
    <lineage>
        <taxon>Eukaryota</taxon>
        <taxon>Fungi</taxon>
        <taxon>Dikarya</taxon>
        <taxon>Ascomycota</taxon>
        <taxon>Taphrinomycotina</taxon>
        <taxon>Schizosaccharomycetes</taxon>
        <taxon>Schizosaccharomycetales</taxon>
        <taxon>Schizosaccharomycetaceae</taxon>
        <taxon>Schizosaccharomyces</taxon>
    </lineage>
</organism>
<evidence type="ECO:0000255" key="1">
    <source>
        <dbReference type="PROSITE-ProRule" id="PRU00190"/>
    </source>
</evidence>
<protein>
    <recommendedName>
        <fullName>Uncharacterized protein C16C6.01c</fullName>
    </recommendedName>
</protein>
<reference key="1">
    <citation type="journal article" date="2002" name="Nature">
        <title>The genome sequence of Schizosaccharomyces pombe.</title>
        <authorList>
            <person name="Wood V."/>
            <person name="Gwilliam R."/>
            <person name="Rajandream M.A."/>
            <person name="Lyne M.H."/>
            <person name="Lyne R."/>
            <person name="Stewart A."/>
            <person name="Sgouros J.G."/>
            <person name="Peat N."/>
            <person name="Hayles J."/>
            <person name="Baker S.G."/>
            <person name="Basham D."/>
            <person name="Bowman S."/>
            <person name="Brooks K."/>
            <person name="Brown D."/>
            <person name="Brown S."/>
            <person name="Chillingworth T."/>
            <person name="Churcher C.M."/>
            <person name="Collins M."/>
            <person name="Connor R."/>
            <person name="Cronin A."/>
            <person name="Davis P."/>
            <person name="Feltwell T."/>
            <person name="Fraser A."/>
            <person name="Gentles S."/>
            <person name="Goble A."/>
            <person name="Hamlin N."/>
            <person name="Harris D.E."/>
            <person name="Hidalgo J."/>
            <person name="Hodgson G."/>
            <person name="Holroyd S."/>
            <person name="Hornsby T."/>
            <person name="Howarth S."/>
            <person name="Huckle E.J."/>
            <person name="Hunt S."/>
            <person name="Jagels K."/>
            <person name="James K.D."/>
            <person name="Jones L."/>
            <person name="Jones M."/>
            <person name="Leather S."/>
            <person name="McDonald S."/>
            <person name="McLean J."/>
            <person name="Mooney P."/>
            <person name="Moule S."/>
            <person name="Mungall K.L."/>
            <person name="Murphy L.D."/>
            <person name="Niblett D."/>
            <person name="Odell C."/>
            <person name="Oliver K."/>
            <person name="O'Neil S."/>
            <person name="Pearson D."/>
            <person name="Quail M.A."/>
            <person name="Rabbinowitsch E."/>
            <person name="Rutherford K.M."/>
            <person name="Rutter S."/>
            <person name="Saunders D."/>
            <person name="Seeger K."/>
            <person name="Sharp S."/>
            <person name="Skelton J."/>
            <person name="Simmonds M.N."/>
            <person name="Squares R."/>
            <person name="Squares S."/>
            <person name="Stevens K."/>
            <person name="Taylor K."/>
            <person name="Taylor R.G."/>
            <person name="Tivey A."/>
            <person name="Walsh S.V."/>
            <person name="Warren T."/>
            <person name="Whitehead S."/>
            <person name="Woodward J.R."/>
            <person name="Volckaert G."/>
            <person name="Aert R."/>
            <person name="Robben J."/>
            <person name="Grymonprez B."/>
            <person name="Weltjens I."/>
            <person name="Vanstreels E."/>
            <person name="Rieger M."/>
            <person name="Schaefer M."/>
            <person name="Mueller-Auer S."/>
            <person name="Gabel C."/>
            <person name="Fuchs M."/>
            <person name="Duesterhoeft A."/>
            <person name="Fritzc C."/>
            <person name="Holzer E."/>
            <person name="Moestl D."/>
            <person name="Hilbert H."/>
            <person name="Borzym K."/>
            <person name="Langer I."/>
            <person name="Beck A."/>
            <person name="Lehrach H."/>
            <person name="Reinhardt R."/>
            <person name="Pohl T.M."/>
            <person name="Eger P."/>
            <person name="Zimmermann W."/>
            <person name="Wedler H."/>
            <person name="Wambutt R."/>
            <person name="Purnelle B."/>
            <person name="Goffeau A."/>
            <person name="Cadieu E."/>
            <person name="Dreano S."/>
            <person name="Gloux S."/>
            <person name="Lelaure V."/>
            <person name="Mottier S."/>
            <person name="Galibert F."/>
            <person name="Aves S.J."/>
            <person name="Xiang Z."/>
            <person name="Hunt C."/>
            <person name="Moore K."/>
            <person name="Hurst S.M."/>
            <person name="Lucas M."/>
            <person name="Rochet M."/>
            <person name="Gaillardin C."/>
            <person name="Tallada V.A."/>
            <person name="Garzon A."/>
            <person name="Thode G."/>
            <person name="Daga R.R."/>
            <person name="Cruzado L."/>
            <person name="Jimenez J."/>
            <person name="Sanchez M."/>
            <person name="del Rey F."/>
            <person name="Benito J."/>
            <person name="Dominguez A."/>
            <person name="Revuelta J.L."/>
            <person name="Moreno S."/>
            <person name="Armstrong J."/>
            <person name="Forsburg S.L."/>
            <person name="Cerutti L."/>
            <person name="Lowe T."/>
            <person name="McCombie W.R."/>
            <person name="Paulsen I."/>
            <person name="Potashkin J."/>
            <person name="Shpakovski G.V."/>
            <person name="Ussery D."/>
            <person name="Barrell B.G."/>
            <person name="Nurse P."/>
        </authorList>
    </citation>
    <scope>NUCLEOTIDE SEQUENCE [LARGE SCALE GENOMIC DNA]</scope>
    <source>
        <strain>972 / ATCC 24843</strain>
    </source>
</reference>
<feature type="chain" id="PRO_0000116510" description="Uncharacterized protein C16C6.01c">
    <location>
        <begin position="1"/>
        <end position="473"/>
    </location>
</feature>
<feature type="domain" description="SET" evidence="1">
    <location>
        <begin position="26"/>
        <end position="254"/>
    </location>
</feature>
<sequence length="473" mass="55578">MNNSKQFLKYQPLLEWLAKHEAYISPKLYIASSGVAGDGIFSTFDIDELEVLAKIPRRIILSPRNSRFGDSLYTHFNESNRSDDINFDNRDQVGLVMLVITVILENITDSPWNAYLNTLDETCMPDSPLLWKDKTCLEGTSMLDVINTNLRVYKNQYDQLVRPYFYKHADLKQLCPKWNQYLETCVLVQSRCFYVNSYYGLSLIPFFDIFNHKSGPAIASLHCQESNDHKGDIKIEFISFQYIRKMSEIFNSFGNFAADELFTQYGFIDTACKVWRVDMTMIAYETNRNFYMEWIHKKRIINTQELLVTPTTYANDKSETLRSVMIRQPMDLYIITDHGPSYGLYLYLFFCIYKIKFQKCDMNIVMLTKYFNEIWAVFIAHKEGEKEKVVAQLSGFSFYCKAIEFLQMLCQKRISRFKNGGLTAEAYKTLLCDPTLKRENRSRLVLQIFYHELNLLEKSMQETIYLCTENFED</sequence>
<accession>O42925</accession>
<accession>Q9HGM1</accession>
<dbReference type="EMBL" id="CU329671">
    <property type="protein sequence ID" value="CAC05253.2"/>
    <property type="molecule type" value="Genomic_DNA"/>
</dbReference>
<dbReference type="PIR" id="T39552">
    <property type="entry name" value="T39552"/>
</dbReference>
<dbReference type="RefSeq" id="NP_596799.2">
    <property type="nucleotide sequence ID" value="NM_001023819.3"/>
</dbReference>
<dbReference type="SMR" id="O42925"/>
<dbReference type="BioGRID" id="276662">
    <property type="interactions" value="10"/>
</dbReference>
<dbReference type="FunCoup" id="O42925">
    <property type="interactions" value="278"/>
</dbReference>
<dbReference type="STRING" id="284812.O42925"/>
<dbReference type="iPTMnet" id="O42925"/>
<dbReference type="PaxDb" id="4896-SPBC16C6.01c.1"/>
<dbReference type="EnsemblFungi" id="SPBC16C6.01c.1">
    <property type="protein sequence ID" value="SPBC16C6.01c.1:pep"/>
    <property type="gene ID" value="SPBC16C6.01c"/>
</dbReference>
<dbReference type="PomBase" id="SPBC16C6.01c"/>
<dbReference type="VEuPathDB" id="FungiDB:SPBC16C6.01c"/>
<dbReference type="eggNOG" id="KOG1338">
    <property type="taxonomic scope" value="Eukaryota"/>
</dbReference>
<dbReference type="HOGENOM" id="CLU_553375_0_0_1"/>
<dbReference type="InParanoid" id="O42925"/>
<dbReference type="OMA" id="GSFCADE"/>
<dbReference type="PhylomeDB" id="O42925"/>
<dbReference type="PRO" id="PR:O42925"/>
<dbReference type="Proteomes" id="UP000002485">
    <property type="component" value="Chromosome II"/>
</dbReference>
<dbReference type="GO" id="GO:0005829">
    <property type="term" value="C:cytosol"/>
    <property type="evidence" value="ECO:0007005"/>
    <property type="project" value="PomBase"/>
</dbReference>
<dbReference type="GO" id="GO:0005634">
    <property type="term" value="C:nucleus"/>
    <property type="evidence" value="ECO:0007005"/>
    <property type="project" value="PomBase"/>
</dbReference>
<dbReference type="GO" id="GO:0016279">
    <property type="term" value="F:protein-lysine N-methyltransferase activity"/>
    <property type="evidence" value="ECO:0000318"/>
    <property type="project" value="GO_Central"/>
</dbReference>
<dbReference type="GO" id="GO:0042254">
    <property type="term" value="P:ribosome biogenesis"/>
    <property type="evidence" value="ECO:0000266"/>
    <property type="project" value="PomBase"/>
</dbReference>
<dbReference type="CDD" id="cd10527">
    <property type="entry name" value="SET_LSMT"/>
    <property type="match status" value="1"/>
</dbReference>
<dbReference type="Gene3D" id="3.90.1410.10">
    <property type="entry name" value="set domain protein methyltransferase, domain 1"/>
    <property type="match status" value="1"/>
</dbReference>
<dbReference type="InterPro" id="IPR001214">
    <property type="entry name" value="SET_dom"/>
</dbReference>
<dbReference type="InterPro" id="IPR046341">
    <property type="entry name" value="SET_dom_sf"/>
</dbReference>
<dbReference type="InterPro" id="IPR050600">
    <property type="entry name" value="SETD3_SETD6_MTase"/>
</dbReference>
<dbReference type="PANTHER" id="PTHR13271:SF34">
    <property type="entry name" value="N-LYSINE METHYLTRANSFERASE SETD6"/>
    <property type="match status" value="1"/>
</dbReference>
<dbReference type="PANTHER" id="PTHR13271">
    <property type="entry name" value="UNCHARACTERIZED PUTATIVE METHYLTRANSFERASE"/>
    <property type="match status" value="1"/>
</dbReference>
<dbReference type="SMART" id="SM00317">
    <property type="entry name" value="SET"/>
    <property type="match status" value="1"/>
</dbReference>
<dbReference type="SUPFAM" id="SSF82199">
    <property type="entry name" value="SET domain"/>
    <property type="match status" value="1"/>
</dbReference>
<dbReference type="PROSITE" id="PS50280">
    <property type="entry name" value="SET"/>
    <property type="match status" value="1"/>
</dbReference>